<comment type="function">
    <text evidence="1">Protein transport. Probably involved in vesicular traffic from ER to Golgi (By similarity).</text>
</comment>
<comment type="subcellular location">
    <subcellularLocation>
        <location evidence="2">Cell membrane</location>
        <topology evidence="2">Lipid-anchor</topology>
        <orientation evidence="2">Cytoplasmic side</orientation>
    </subcellularLocation>
</comment>
<comment type="similarity">
    <text evidence="2">Belongs to the small GTPase superfamily. Rab family.</text>
</comment>
<feature type="chain" id="PRO_0000233339" description="Ras-related protein Rab-1">
    <location>
        <begin position="1"/>
        <end position="220"/>
    </location>
</feature>
<feature type="short sequence motif" description="Effector region" evidence="1">
    <location>
        <begin position="36"/>
        <end position="44"/>
    </location>
</feature>
<feature type="binding site" evidence="1">
    <location>
        <begin position="14"/>
        <end position="21"/>
    </location>
    <ligand>
        <name>GTP</name>
        <dbReference type="ChEBI" id="CHEBI:37565"/>
    </ligand>
</feature>
<feature type="binding site" evidence="1">
    <location>
        <begin position="62"/>
        <end position="66"/>
    </location>
    <ligand>
        <name>GTP</name>
        <dbReference type="ChEBI" id="CHEBI:37565"/>
    </ligand>
</feature>
<feature type="binding site" evidence="1">
    <location>
        <begin position="121"/>
        <end position="124"/>
    </location>
    <ligand>
        <name>GTP</name>
        <dbReference type="ChEBI" id="CHEBI:37565"/>
    </ligand>
</feature>
<feature type="lipid moiety-binding region" description="S-geranylgeranyl cysteine" evidence="1">
    <location>
        <position position="219"/>
    </location>
</feature>
<dbReference type="EMBL" id="CR940352">
    <property type="protein sequence ID" value="CAI75985.1"/>
    <property type="molecule type" value="Genomic_DNA"/>
</dbReference>
<dbReference type="RefSeq" id="XP_955461.1">
    <property type="nucleotide sequence ID" value="XM_950368.1"/>
</dbReference>
<dbReference type="SMR" id="Q4UB16"/>
<dbReference type="FunCoup" id="Q4UB16">
    <property type="interactions" value="387"/>
</dbReference>
<dbReference type="STRING" id="5874.Q4UB16"/>
<dbReference type="GeneID" id="3864726"/>
<dbReference type="KEGG" id="tan:TA18180"/>
<dbReference type="VEuPathDB" id="PiroplasmaDB:TA18180"/>
<dbReference type="eggNOG" id="KOG0084">
    <property type="taxonomic scope" value="Eukaryota"/>
</dbReference>
<dbReference type="InParanoid" id="Q4UB16"/>
<dbReference type="OMA" id="FIERHGN"/>
<dbReference type="OrthoDB" id="9989112at2759"/>
<dbReference type="Proteomes" id="UP000001950">
    <property type="component" value="Chromosome 3"/>
</dbReference>
<dbReference type="GO" id="GO:0005886">
    <property type="term" value="C:plasma membrane"/>
    <property type="evidence" value="ECO:0007669"/>
    <property type="project" value="UniProtKB-SubCell"/>
</dbReference>
<dbReference type="GO" id="GO:0005525">
    <property type="term" value="F:GTP binding"/>
    <property type="evidence" value="ECO:0007669"/>
    <property type="project" value="UniProtKB-KW"/>
</dbReference>
<dbReference type="GO" id="GO:0003924">
    <property type="term" value="F:GTPase activity"/>
    <property type="evidence" value="ECO:0007669"/>
    <property type="project" value="InterPro"/>
</dbReference>
<dbReference type="GO" id="GO:0015031">
    <property type="term" value="P:protein transport"/>
    <property type="evidence" value="ECO:0007669"/>
    <property type="project" value="UniProtKB-KW"/>
</dbReference>
<dbReference type="FunFam" id="3.40.50.300:FF:001018">
    <property type="entry name" value="Rab family GTPase"/>
    <property type="match status" value="1"/>
</dbReference>
<dbReference type="Gene3D" id="3.40.50.300">
    <property type="entry name" value="P-loop containing nucleotide triphosphate hydrolases"/>
    <property type="match status" value="1"/>
</dbReference>
<dbReference type="InterPro" id="IPR027417">
    <property type="entry name" value="P-loop_NTPase"/>
</dbReference>
<dbReference type="InterPro" id="IPR050227">
    <property type="entry name" value="Rab"/>
</dbReference>
<dbReference type="InterPro" id="IPR005225">
    <property type="entry name" value="Small_GTP-bd"/>
</dbReference>
<dbReference type="InterPro" id="IPR001806">
    <property type="entry name" value="Small_GTPase"/>
</dbReference>
<dbReference type="NCBIfam" id="TIGR00231">
    <property type="entry name" value="small_GTP"/>
    <property type="match status" value="1"/>
</dbReference>
<dbReference type="PANTHER" id="PTHR47977">
    <property type="entry name" value="RAS-RELATED PROTEIN RAB"/>
    <property type="match status" value="1"/>
</dbReference>
<dbReference type="Pfam" id="PF00071">
    <property type="entry name" value="Ras"/>
    <property type="match status" value="1"/>
</dbReference>
<dbReference type="PRINTS" id="PR00449">
    <property type="entry name" value="RASTRNSFRMNG"/>
</dbReference>
<dbReference type="SMART" id="SM00177">
    <property type="entry name" value="ARF"/>
    <property type="match status" value="1"/>
</dbReference>
<dbReference type="SMART" id="SM00175">
    <property type="entry name" value="RAB"/>
    <property type="match status" value="1"/>
</dbReference>
<dbReference type="SMART" id="SM00176">
    <property type="entry name" value="RAN"/>
    <property type="match status" value="1"/>
</dbReference>
<dbReference type="SMART" id="SM00173">
    <property type="entry name" value="RAS"/>
    <property type="match status" value="1"/>
</dbReference>
<dbReference type="SMART" id="SM00174">
    <property type="entry name" value="RHO"/>
    <property type="match status" value="1"/>
</dbReference>
<dbReference type="SUPFAM" id="SSF52540">
    <property type="entry name" value="P-loop containing nucleoside triphosphate hydrolases"/>
    <property type="match status" value="1"/>
</dbReference>
<dbReference type="PROSITE" id="PS51419">
    <property type="entry name" value="RAB"/>
    <property type="match status" value="1"/>
</dbReference>
<keyword id="KW-1003">Cell membrane</keyword>
<keyword id="KW-0342">GTP-binding</keyword>
<keyword id="KW-0449">Lipoprotein</keyword>
<keyword id="KW-0472">Membrane</keyword>
<keyword id="KW-0547">Nucleotide-binding</keyword>
<keyword id="KW-0636">Prenylation</keyword>
<keyword id="KW-0653">Protein transport</keyword>
<keyword id="KW-1185">Reference proteome</keyword>
<keyword id="KW-0813">Transport</keyword>
<proteinExistence type="inferred from homology"/>
<accession>Q4UB16</accession>
<sequence>MKEYDYLFKIIVIGDSGTGKSSLLLRFADNTYSESYMSTIGVDFKIKTVKIDNTTIKLQIWDTAGQERFRTITSTYYRGAHGIICVYDVTNKLSFDHITETWLQDIDKYATSNVCKLLIGNKIDLVDSRVVLADEAKHVAEQNNMNYIEASAKTDSNVEKAFTTIAKALKDKVTQYPSNAPTSTVNLSNASKVTTNRGISDSCQESSVFKKMNFSSGKCT</sequence>
<name>RAB1_THEAN</name>
<reference key="1">
    <citation type="journal article" date="2005" name="Science">
        <title>Genome of the host-cell transforming parasite Theileria annulata compared with T. parva.</title>
        <authorList>
            <person name="Pain A."/>
            <person name="Renauld H."/>
            <person name="Berriman M."/>
            <person name="Murphy L."/>
            <person name="Yeats C.A."/>
            <person name="Weir W."/>
            <person name="Kerhornou A."/>
            <person name="Aslett M."/>
            <person name="Bishop R."/>
            <person name="Bouchier C."/>
            <person name="Cochet M."/>
            <person name="Coulson R.M.R."/>
            <person name="Cronin A."/>
            <person name="de Villiers E.P."/>
            <person name="Fraser A."/>
            <person name="Fosker N."/>
            <person name="Gardner M."/>
            <person name="Goble A."/>
            <person name="Griffiths-Jones S."/>
            <person name="Harris D.E."/>
            <person name="Katzer F."/>
            <person name="Larke N."/>
            <person name="Lord A."/>
            <person name="Maser P."/>
            <person name="McKellar S."/>
            <person name="Mooney P."/>
            <person name="Morton F."/>
            <person name="Nene V."/>
            <person name="O'Neil S."/>
            <person name="Price C."/>
            <person name="Quail M.A."/>
            <person name="Rabbinowitsch E."/>
            <person name="Rawlings N.D."/>
            <person name="Rutter S."/>
            <person name="Saunders D."/>
            <person name="Seeger K."/>
            <person name="Shah T."/>
            <person name="Squares R."/>
            <person name="Squares S."/>
            <person name="Tivey A."/>
            <person name="Walker A.R."/>
            <person name="Woodward J."/>
            <person name="Dobbelaere D.A.E."/>
            <person name="Langsley G."/>
            <person name="Rajandream M.A."/>
            <person name="McKeever D."/>
            <person name="Shiels B."/>
            <person name="Tait A."/>
            <person name="Barrell B.G."/>
            <person name="Hall N."/>
        </authorList>
    </citation>
    <scope>NUCLEOTIDE SEQUENCE [LARGE SCALE GENOMIC DNA]</scope>
    <source>
        <strain>Ankara</strain>
    </source>
</reference>
<organism>
    <name type="scientific">Theileria annulata</name>
    <dbReference type="NCBI Taxonomy" id="5874"/>
    <lineage>
        <taxon>Eukaryota</taxon>
        <taxon>Sar</taxon>
        <taxon>Alveolata</taxon>
        <taxon>Apicomplexa</taxon>
        <taxon>Aconoidasida</taxon>
        <taxon>Piroplasmida</taxon>
        <taxon>Theileriidae</taxon>
        <taxon>Theileria</taxon>
    </lineage>
</organism>
<evidence type="ECO:0000250" key="1"/>
<evidence type="ECO:0000305" key="2"/>
<protein>
    <recommendedName>
        <fullName>Ras-related protein Rab-1</fullName>
    </recommendedName>
    <alternativeName>
        <fullName>Small GTP-binding protein rab1</fullName>
    </alternativeName>
</protein>
<gene>
    <name type="primary">rab1</name>
    <name type="ORF">TA18180</name>
</gene>